<name>RS4_SALSV</name>
<reference key="1">
    <citation type="journal article" date="2011" name="J. Bacteriol.">
        <title>Comparative genomics of 28 Salmonella enterica isolates: evidence for CRISPR-mediated adaptive sublineage evolution.</title>
        <authorList>
            <person name="Fricke W.F."/>
            <person name="Mammel M.K."/>
            <person name="McDermott P.F."/>
            <person name="Tartera C."/>
            <person name="White D.G."/>
            <person name="Leclerc J.E."/>
            <person name="Ravel J."/>
            <person name="Cebula T.A."/>
        </authorList>
    </citation>
    <scope>NUCLEOTIDE SEQUENCE [LARGE SCALE GENOMIC DNA]</scope>
    <source>
        <strain>CVM19633</strain>
    </source>
</reference>
<feature type="chain" id="PRO_1000140791" description="Small ribosomal subunit protein uS4">
    <location>
        <begin position="1"/>
        <end position="206"/>
    </location>
</feature>
<feature type="domain" description="S4 RNA-binding" evidence="1">
    <location>
        <begin position="96"/>
        <end position="156"/>
    </location>
</feature>
<keyword id="KW-0687">Ribonucleoprotein</keyword>
<keyword id="KW-0689">Ribosomal protein</keyword>
<keyword id="KW-0694">RNA-binding</keyword>
<keyword id="KW-0699">rRNA-binding</keyword>
<proteinExistence type="inferred from homology"/>
<sequence>MARYLGPKLKLSRREGTDLFLKSGVRAIDTKCKIEQAPGQHGARKPRLSDYGVQLREKQKVRRIYGVLERQFRNYYKEAARLKGNTGENLLALLEGRLDNVVYRMGFGATRAEARQLVSHKAIMVNGRVVNIASYQVSPNDVVSIREKAKKQSRVKAALELAEQREKPTWLEVDAGKMEGTYKRKPERSDLSADINEHLIVELYSK</sequence>
<dbReference type="EMBL" id="CP001127">
    <property type="protein sequence ID" value="ACF88735.1"/>
    <property type="molecule type" value="Genomic_DNA"/>
</dbReference>
<dbReference type="RefSeq" id="WP_000135226.1">
    <property type="nucleotide sequence ID" value="NC_011094.1"/>
</dbReference>
<dbReference type="SMR" id="B4TXB9"/>
<dbReference type="GeneID" id="93035755"/>
<dbReference type="KEGG" id="sew:SeSA_A3612"/>
<dbReference type="HOGENOM" id="CLU_092403_0_2_6"/>
<dbReference type="Proteomes" id="UP000001865">
    <property type="component" value="Chromosome"/>
</dbReference>
<dbReference type="GO" id="GO:0015935">
    <property type="term" value="C:small ribosomal subunit"/>
    <property type="evidence" value="ECO:0007669"/>
    <property type="project" value="InterPro"/>
</dbReference>
<dbReference type="GO" id="GO:0019843">
    <property type="term" value="F:rRNA binding"/>
    <property type="evidence" value="ECO:0007669"/>
    <property type="project" value="UniProtKB-UniRule"/>
</dbReference>
<dbReference type="GO" id="GO:0003735">
    <property type="term" value="F:structural constituent of ribosome"/>
    <property type="evidence" value="ECO:0007669"/>
    <property type="project" value="InterPro"/>
</dbReference>
<dbReference type="GO" id="GO:0042274">
    <property type="term" value="P:ribosomal small subunit biogenesis"/>
    <property type="evidence" value="ECO:0007669"/>
    <property type="project" value="TreeGrafter"/>
</dbReference>
<dbReference type="GO" id="GO:0006412">
    <property type="term" value="P:translation"/>
    <property type="evidence" value="ECO:0007669"/>
    <property type="project" value="UniProtKB-UniRule"/>
</dbReference>
<dbReference type="CDD" id="cd00165">
    <property type="entry name" value="S4"/>
    <property type="match status" value="1"/>
</dbReference>
<dbReference type="FunFam" id="1.10.1050.10:FF:000001">
    <property type="entry name" value="30S ribosomal protein S4"/>
    <property type="match status" value="1"/>
</dbReference>
<dbReference type="FunFam" id="3.10.290.10:FF:000001">
    <property type="entry name" value="30S ribosomal protein S4"/>
    <property type="match status" value="1"/>
</dbReference>
<dbReference type="Gene3D" id="1.10.1050.10">
    <property type="entry name" value="Ribosomal Protein S4 Delta 41, Chain A, domain 1"/>
    <property type="match status" value="1"/>
</dbReference>
<dbReference type="Gene3D" id="3.10.290.10">
    <property type="entry name" value="RNA-binding S4 domain"/>
    <property type="match status" value="1"/>
</dbReference>
<dbReference type="HAMAP" id="MF_01306_B">
    <property type="entry name" value="Ribosomal_uS4_B"/>
    <property type="match status" value="1"/>
</dbReference>
<dbReference type="InterPro" id="IPR022801">
    <property type="entry name" value="Ribosomal_uS4"/>
</dbReference>
<dbReference type="InterPro" id="IPR005709">
    <property type="entry name" value="Ribosomal_uS4_bac-type"/>
</dbReference>
<dbReference type="InterPro" id="IPR018079">
    <property type="entry name" value="Ribosomal_uS4_CS"/>
</dbReference>
<dbReference type="InterPro" id="IPR001912">
    <property type="entry name" value="Ribosomal_uS4_N"/>
</dbReference>
<dbReference type="InterPro" id="IPR002942">
    <property type="entry name" value="S4_RNA-bd"/>
</dbReference>
<dbReference type="InterPro" id="IPR036986">
    <property type="entry name" value="S4_RNA-bd_sf"/>
</dbReference>
<dbReference type="NCBIfam" id="NF003717">
    <property type="entry name" value="PRK05327.1"/>
    <property type="match status" value="1"/>
</dbReference>
<dbReference type="NCBIfam" id="TIGR01017">
    <property type="entry name" value="rpsD_bact"/>
    <property type="match status" value="1"/>
</dbReference>
<dbReference type="PANTHER" id="PTHR11831">
    <property type="entry name" value="30S 40S RIBOSOMAL PROTEIN"/>
    <property type="match status" value="1"/>
</dbReference>
<dbReference type="PANTHER" id="PTHR11831:SF4">
    <property type="entry name" value="SMALL RIBOSOMAL SUBUNIT PROTEIN US4M"/>
    <property type="match status" value="1"/>
</dbReference>
<dbReference type="Pfam" id="PF00163">
    <property type="entry name" value="Ribosomal_S4"/>
    <property type="match status" value="1"/>
</dbReference>
<dbReference type="Pfam" id="PF01479">
    <property type="entry name" value="S4"/>
    <property type="match status" value="1"/>
</dbReference>
<dbReference type="SMART" id="SM01390">
    <property type="entry name" value="Ribosomal_S4"/>
    <property type="match status" value="1"/>
</dbReference>
<dbReference type="SMART" id="SM00363">
    <property type="entry name" value="S4"/>
    <property type="match status" value="1"/>
</dbReference>
<dbReference type="SUPFAM" id="SSF55174">
    <property type="entry name" value="Alpha-L RNA-binding motif"/>
    <property type="match status" value="1"/>
</dbReference>
<dbReference type="PROSITE" id="PS00632">
    <property type="entry name" value="RIBOSOMAL_S4"/>
    <property type="match status" value="1"/>
</dbReference>
<dbReference type="PROSITE" id="PS50889">
    <property type="entry name" value="S4"/>
    <property type="match status" value="1"/>
</dbReference>
<comment type="function">
    <text evidence="1">One of the primary rRNA binding proteins, it binds directly to 16S rRNA where it nucleates assembly of the body of the 30S subunit.</text>
</comment>
<comment type="function">
    <text evidence="1">With S5 and S12 plays an important role in translational accuracy.</text>
</comment>
<comment type="subunit">
    <text evidence="1">Part of the 30S ribosomal subunit. Contacts protein S5. The interaction surface between S4 and S5 is involved in control of translational fidelity.</text>
</comment>
<comment type="similarity">
    <text evidence="1">Belongs to the universal ribosomal protein uS4 family.</text>
</comment>
<protein>
    <recommendedName>
        <fullName evidence="1">Small ribosomal subunit protein uS4</fullName>
    </recommendedName>
    <alternativeName>
        <fullName evidence="2">30S ribosomal protein S4</fullName>
    </alternativeName>
</protein>
<accession>B4TXB9</accession>
<organism>
    <name type="scientific">Salmonella schwarzengrund (strain CVM19633)</name>
    <dbReference type="NCBI Taxonomy" id="439843"/>
    <lineage>
        <taxon>Bacteria</taxon>
        <taxon>Pseudomonadati</taxon>
        <taxon>Pseudomonadota</taxon>
        <taxon>Gammaproteobacteria</taxon>
        <taxon>Enterobacterales</taxon>
        <taxon>Enterobacteriaceae</taxon>
        <taxon>Salmonella</taxon>
    </lineage>
</organism>
<evidence type="ECO:0000255" key="1">
    <source>
        <dbReference type="HAMAP-Rule" id="MF_01306"/>
    </source>
</evidence>
<evidence type="ECO:0000305" key="2"/>
<gene>
    <name evidence="1" type="primary">rpsD</name>
    <name type="ordered locus">SeSA_A3612</name>
</gene>